<name>OMT1_CHRAE</name>
<gene>
    <name evidence="5" type="primary">OMT1</name>
</gene>
<organism>
    <name type="scientific">Chrysosplenium americanum</name>
    <name type="common">American golden saxifrage</name>
    <dbReference type="NCBI Taxonomy" id="36749"/>
    <lineage>
        <taxon>Eukaryota</taxon>
        <taxon>Viridiplantae</taxon>
        <taxon>Streptophyta</taxon>
        <taxon>Embryophyta</taxon>
        <taxon>Tracheophyta</taxon>
        <taxon>Spermatophyta</taxon>
        <taxon>Magnoliopsida</taxon>
        <taxon>eudicotyledons</taxon>
        <taxon>Gunneridae</taxon>
        <taxon>Pentapetalae</taxon>
        <taxon>Saxifragales</taxon>
        <taxon>Saxifragaceae</taxon>
        <taxon>Chrysosplenieae</taxon>
        <taxon>Chrysosplenium</taxon>
    </lineage>
</organism>
<evidence type="ECO:0000250" key="1">
    <source>
        <dbReference type="UniProtKB" id="F1DBB3"/>
    </source>
</evidence>
<evidence type="ECO:0000250" key="2">
    <source>
        <dbReference type="UniProtKB" id="P28002"/>
    </source>
</evidence>
<evidence type="ECO:0000255" key="3">
    <source>
        <dbReference type="PROSITE-ProRule" id="PRU01020"/>
    </source>
</evidence>
<evidence type="ECO:0000269" key="4">
    <source>
    </source>
</evidence>
<evidence type="ECO:0000303" key="5">
    <source>
    </source>
</evidence>
<evidence type="ECO:0000305" key="6"/>
<sequence>MLFAMQLASASVLPMVLKSAIELDLLEIIRGQDTCMSPTEIASHLPTTNPDAPAMVDRILRLLSCYSVVTCSVRSVDDQRVYGLAPVCKYLTKNQDGVSIAALCLMNQDKVLMESWYHLKDAVLDGGIPFNKAYGMSSFEYHGTDPRFNKVFNRGMSDHSTITMKKVFQAYQGFQGLTSLVDVGGGTGATLTMILSKYPTIRCINFDLPHVIEDAPEYPGIEHVGGDMFVSVPKGDAIFMKWICHDWSDEHCLKLLKNCYDALPNNGKVILAECILPEVPDSSLATKGVVHIDVITVAHNPGGKERTEKEFEALAKAAGFQGFQVFCNAFNTYIIEFSKQICN</sequence>
<reference key="1">
    <citation type="journal article" date="1998" name="Arch. Biochem. Biophys.">
        <title>Characterization of two cDNA clones which encode O-methyltransferases for the methylation of both flavonoid and phenylpropanoid compounds.</title>
        <authorList>
            <person name="Gauthier A."/>
            <person name="Gulick P.J."/>
            <person name="Ibrahim R.K."/>
        </authorList>
    </citation>
    <scope>NUCLEOTIDE SEQUENCE</scope>
    <scope>FUNCTION</scope>
    <scope>CATALYTIC ACTIVITY</scope>
    <scope>BIOPHYSICOCHEMICAL PROPERTIES</scope>
    <source>
        <tissue>Leaf</tissue>
    </source>
</reference>
<proteinExistence type="evidence at protein level"/>
<dbReference type="EC" id="2.1.1.42" evidence="4"/>
<dbReference type="SMR" id="P59049"/>
<dbReference type="GO" id="GO:0047763">
    <property type="term" value="F:caffeate O-methyltransferase activity"/>
    <property type="evidence" value="ECO:0007669"/>
    <property type="project" value="RHEA"/>
</dbReference>
<dbReference type="GO" id="GO:0102822">
    <property type="term" value="F:flavone 3'-O-methyltransferase activity"/>
    <property type="evidence" value="ECO:0000314"/>
    <property type="project" value="UniProtKB"/>
</dbReference>
<dbReference type="GO" id="GO:0046983">
    <property type="term" value="F:protein dimerization activity"/>
    <property type="evidence" value="ECO:0007669"/>
    <property type="project" value="InterPro"/>
</dbReference>
<dbReference type="GO" id="GO:0030755">
    <property type="term" value="F:quercetin 3-O-methyltransferase activity"/>
    <property type="evidence" value="ECO:0000314"/>
    <property type="project" value="UniProtKB"/>
</dbReference>
<dbReference type="GO" id="GO:0009812">
    <property type="term" value="P:flavonoid metabolic process"/>
    <property type="evidence" value="ECO:0000314"/>
    <property type="project" value="UniProtKB"/>
</dbReference>
<dbReference type="GO" id="GO:0032259">
    <property type="term" value="P:methylation"/>
    <property type="evidence" value="ECO:0007669"/>
    <property type="project" value="UniProtKB-KW"/>
</dbReference>
<dbReference type="CDD" id="cd02440">
    <property type="entry name" value="AdoMet_MTases"/>
    <property type="match status" value="1"/>
</dbReference>
<dbReference type="FunFam" id="1.10.10.10:FF:000357">
    <property type="entry name" value="Caffeic acid 3-O-methyltransferase"/>
    <property type="match status" value="1"/>
</dbReference>
<dbReference type="FunFam" id="3.40.50.150:FF:000061">
    <property type="entry name" value="Caffeic acid O-methyltransferase"/>
    <property type="match status" value="1"/>
</dbReference>
<dbReference type="Gene3D" id="3.40.50.150">
    <property type="entry name" value="Vaccinia Virus protein VP39"/>
    <property type="match status" value="1"/>
</dbReference>
<dbReference type="Gene3D" id="1.10.10.10">
    <property type="entry name" value="Winged helix-like DNA-binding domain superfamily/Winged helix DNA-binding domain"/>
    <property type="match status" value="1"/>
</dbReference>
<dbReference type="InterPro" id="IPR016461">
    <property type="entry name" value="COMT-like"/>
</dbReference>
<dbReference type="InterPro" id="IPR001077">
    <property type="entry name" value="O_MeTrfase_dom"/>
</dbReference>
<dbReference type="InterPro" id="IPR012967">
    <property type="entry name" value="Plant_O-MeTrfase_dimerisation"/>
</dbReference>
<dbReference type="InterPro" id="IPR029063">
    <property type="entry name" value="SAM-dependent_MTases_sf"/>
</dbReference>
<dbReference type="InterPro" id="IPR036388">
    <property type="entry name" value="WH-like_DNA-bd_sf"/>
</dbReference>
<dbReference type="InterPro" id="IPR036390">
    <property type="entry name" value="WH_DNA-bd_sf"/>
</dbReference>
<dbReference type="PANTHER" id="PTHR11746">
    <property type="entry name" value="O-METHYLTRANSFERASE"/>
    <property type="match status" value="1"/>
</dbReference>
<dbReference type="Pfam" id="PF08100">
    <property type="entry name" value="Dimerisation"/>
    <property type="match status" value="1"/>
</dbReference>
<dbReference type="Pfam" id="PF00891">
    <property type="entry name" value="Methyltransf_2"/>
    <property type="match status" value="1"/>
</dbReference>
<dbReference type="PIRSF" id="PIRSF005739">
    <property type="entry name" value="O-mtase"/>
    <property type="match status" value="1"/>
</dbReference>
<dbReference type="SUPFAM" id="SSF53335">
    <property type="entry name" value="S-adenosyl-L-methionine-dependent methyltransferases"/>
    <property type="match status" value="1"/>
</dbReference>
<dbReference type="SUPFAM" id="SSF46785">
    <property type="entry name" value="Winged helix' DNA-binding domain"/>
    <property type="match status" value="1"/>
</dbReference>
<dbReference type="PROSITE" id="PS51683">
    <property type="entry name" value="SAM_OMT_II"/>
    <property type="match status" value="1"/>
</dbReference>
<comment type="function">
    <text evidence="4">Catalyzes the 3'-O-methylation of the flavonoids luteolin and quercetin (PubMed:9514654). Catalyzes the 3- of 5-O-methylation of the phenylpropanoids caffeate and 5-hydroxyferulate (PubMed:9514654). Substrate preference is 5-hydroxyferulate &gt; luteolin &gt; quercetin &gt; caffeate (PubMed:9514654). Apigenin, kempferol and 3,4-dimethylquercetin do not seem to be substrates for methylation (PubMed:9514654).</text>
</comment>
<comment type="catalytic activity">
    <reaction evidence="4">
        <text>(E)-5-hydroxyferulate + S-adenosyl-L-methionine = (E)-sinapate + S-adenosyl-L-homocysteine + H(+)</text>
        <dbReference type="Rhea" id="RHEA:60952"/>
        <dbReference type="ChEBI" id="CHEBI:15378"/>
        <dbReference type="ChEBI" id="CHEBI:30023"/>
        <dbReference type="ChEBI" id="CHEBI:57856"/>
        <dbReference type="ChEBI" id="CHEBI:59789"/>
        <dbReference type="ChEBI" id="CHEBI:144381"/>
    </reaction>
    <physiologicalReaction direction="left-to-right" evidence="4">
        <dbReference type="Rhea" id="RHEA:60953"/>
    </physiologicalReaction>
</comment>
<comment type="catalytic activity">
    <reaction evidence="4">
        <text>luteolin + S-adenosyl-L-methionine = chrysoeriol + S-adenosyl-L-homocysteine + H(+)</text>
        <dbReference type="Rhea" id="RHEA:14589"/>
        <dbReference type="ChEBI" id="CHEBI:15378"/>
        <dbReference type="ChEBI" id="CHEBI:57545"/>
        <dbReference type="ChEBI" id="CHEBI:57799"/>
        <dbReference type="ChEBI" id="CHEBI:57856"/>
        <dbReference type="ChEBI" id="CHEBI:59789"/>
    </reaction>
    <physiologicalReaction direction="left-to-right" evidence="4">
        <dbReference type="Rhea" id="RHEA:14590"/>
    </physiologicalReaction>
</comment>
<comment type="catalytic activity">
    <reaction evidence="4">
        <text>quercetin + S-adenosyl-L-methionine = isorhamnetin + S-adenosyl-L-homocysteine + H(+)</text>
        <dbReference type="Rhea" id="RHEA:60944"/>
        <dbReference type="ChEBI" id="CHEBI:15378"/>
        <dbReference type="ChEBI" id="CHEBI:57694"/>
        <dbReference type="ChEBI" id="CHEBI:57856"/>
        <dbReference type="ChEBI" id="CHEBI:59789"/>
        <dbReference type="ChEBI" id="CHEBI:144055"/>
    </reaction>
    <physiologicalReaction direction="left-to-right" evidence="4">
        <dbReference type="Rhea" id="RHEA:60945"/>
    </physiologicalReaction>
</comment>
<comment type="catalytic activity">
    <reaction evidence="4">
        <text>(E)-caffeate + S-adenosyl-L-methionine = (E)-ferulate + S-adenosyl-L-homocysteine + H(+)</text>
        <dbReference type="Rhea" id="RHEA:20225"/>
        <dbReference type="ChEBI" id="CHEBI:15378"/>
        <dbReference type="ChEBI" id="CHEBI:29749"/>
        <dbReference type="ChEBI" id="CHEBI:57770"/>
        <dbReference type="ChEBI" id="CHEBI:57856"/>
        <dbReference type="ChEBI" id="CHEBI:59789"/>
    </reaction>
    <physiologicalReaction direction="left-to-right" evidence="4">
        <dbReference type="Rhea" id="RHEA:20226"/>
    </physiologicalReaction>
</comment>
<comment type="catalytic activity">
    <reaction evidence="4">
        <text>a 3'-hydroxyflavone + S-adenosyl-L-methionine = a 3'-methoxyflavone + S-adenosyl-L-homocysteine + H(+)</text>
        <dbReference type="Rhea" id="RHEA:55332"/>
        <dbReference type="ChEBI" id="CHEBI:15378"/>
        <dbReference type="ChEBI" id="CHEBI:27741"/>
        <dbReference type="ChEBI" id="CHEBI:57856"/>
        <dbReference type="ChEBI" id="CHEBI:59789"/>
        <dbReference type="ChEBI" id="CHEBI:138730"/>
        <dbReference type="EC" id="2.1.1.42"/>
    </reaction>
    <physiologicalReaction direction="left-to-right" evidence="4">
        <dbReference type="Rhea" id="RHEA:55333"/>
    </physiologicalReaction>
</comment>
<comment type="biophysicochemical properties">
    <kinetics>
        <KM evidence="4">2.38 uM for quercetin</KM>
        <KM evidence="4">4.35 uM for luteolin</KM>
        <KM evidence="4">13.55 uM for 5-hydroxyferrulate</KM>
        <KM evidence="4">15.25 uM for caffeate</KM>
        <Vmax evidence="4">31.5 nmol/sec/mg enzyme with quercetin as substrate</Vmax>
        <Vmax evidence="4">56.3 nmol/sec/mg enzyme with luteolin as substrate</Vmax>
        <Vmax evidence="4">70.3 nmol/sec/mg enzyme with 5-hydroxyferrulate as substrate</Vmax>
        <Vmax evidence="4">33.2 nmol/sec/mg enzyme with caffeate as substrate</Vmax>
    </kinetics>
</comment>
<comment type="pathway">
    <text evidence="6">Flavonoid metabolism.</text>
</comment>
<comment type="subunit">
    <text evidence="2">Homodimer.</text>
</comment>
<comment type="similarity">
    <text evidence="6">Belongs to the class I-like SAM-binding methyltransferase superfamily. Cation-independent O-methyltransferase family. COMT subfamily.</text>
</comment>
<comment type="caution">
    <text evidence="6">It is not sure whether OMT1 and OMT2 are really encoded by two different genes or if they represent cloning artifacts.</text>
</comment>
<feature type="chain" id="PRO_0000063215" description="Flavone 3'-O-methyltransferase OMT1">
    <location>
        <begin position="1"/>
        <end position="343"/>
    </location>
</feature>
<feature type="active site" description="Proton acceptor" evidence="3">
    <location>
        <position position="245"/>
    </location>
</feature>
<feature type="active site" evidence="1">
    <location>
        <position position="273"/>
    </location>
</feature>
<feature type="active site" evidence="1">
    <location>
        <position position="305"/>
    </location>
</feature>
<feature type="binding site" evidence="2">
    <location>
        <position position="107"/>
    </location>
    <ligand>
        <name>(E)-ferulate</name>
        <dbReference type="ChEBI" id="CHEBI:29749"/>
    </ligand>
</feature>
<feature type="binding site" evidence="2">
    <location>
        <position position="184"/>
    </location>
    <ligand>
        <name>S-adenosyl-L-homocysteine</name>
        <dbReference type="ChEBI" id="CHEBI:57856"/>
    </ligand>
</feature>
<feature type="binding site" evidence="2">
    <location>
        <position position="207"/>
    </location>
    <ligand>
        <name>S-adenosyl-L-homocysteine</name>
        <dbReference type="ChEBI" id="CHEBI:57856"/>
    </ligand>
</feature>
<feature type="binding site" evidence="2">
    <location>
        <position position="227"/>
    </location>
    <ligand>
        <name>S-adenosyl-L-homocysteine</name>
        <dbReference type="ChEBI" id="CHEBI:57856"/>
    </ligand>
</feature>
<feature type="binding site" evidence="2">
    <location>
        <position position="228"/>
    </location>
    <ligand>
        <name>S-adenosyl-L-homocysteine</name>
        <dbReference type="ChEBI" id="CHEBI:57856"/>
    </ligand>
</feature>
<feature type="binding site" evidence="2">
    <location>
        <position position="240"/>
    </location>
    <ligand>
        <name>S-adenosyl-L-homocysteine</name>
        <dbReference type="ChEBI" id="CHEBI:57856"/>
    </ligand>
</feature>
<feature type="binding site" evidence="2">
    <location>
        <position position="241"/>
    </location>
    <ligand>
        <name>S-adenosyl-L-homocysteine</name>
        <dbReference type="ChEBI" id="CHEBI:57856"/>
    </ligand>
</feature>
<feature type="binding site" evidence="2">
    <location>
        <position position="246"/>
    </location>
    <ligand>
        <name>(E)-5-hydroxyferulate</name>
        <dbReference type="ChEBI" id="CHEBI:144381"/>
    </ligand>
</feature>
<accession>P59049</accession>
<keyword id="KW-0489">Methyltransferase</keyword>
<keyword id="KW-0949">S-adenosyl-L-methionine</keyword>
<keyword id="KW-0808">Transferase</keyword>
<protein>
    <recommendedName>
        <fullName evidence="6">Flavone 3'-O-methyltransferase OMT1</fullName>
        <ecNumber evidence="4">2.1.1.42</ecNumber>
    </recommendedName>
</protein>